<feature type="chain" id="PRO_0000363980" description="FNIP repeat-containing protein DDB_G0277323">
    <location>
        <begin position="1"/>
        <end position="364"/>
    </location>
</feature>
<feature type="repeat" description="FNIP 1">
    <location>
        <begin position="57"/>
        <end position="98"/>
    </location>
</feature>
<feature type="repeat" description="FNIP 2">
    <location>
        <begin position="155"/>
        <end position="198"/>
    </location>
</feature>
<feature type="repeat" description="FNIP 3">
    <location>
        <begin position="214"/>
        <end position="244"/>
    </location>
</feature>
<feature type="repeat" description="FNIP 4">
    <location>
        <begin position="245"/>
        <end position="271"/>
    </location>
</feature>
<feature type="repeat" description="FNIP 5">
    <location>
        <begin position="295"/>
        <end position="340"/>
    </location>
</feature>
<accession>Q1ZXK1</accession>
<accession>Q86K75</accession>
<organism>
    <name type="scientific">Dictyostelium discoideum</name>
    <name type="common">Social amoeba</name>
    <dbReference type="NCBI Taxonomy" id="44689"/>
    <lineage>
        <taxon>Eukaryota</taxon>
        <taxon>Amoebozoa</taxon>
        <taxon>Evosea</taxon>
        <taxon>Eumycetozoa</taxon>
        <taxon>Dictyostelia</taxon>
        <taxon>Dictyosteliales</taxon>
        <taxon>Dictyosteliaceae</taxon>
        <taxon>Dictyostelium</taxon>
    </lineage>
</organism>
<protein>
    <recommendedName>
        <fullName>FNIP repeat-containing protein DDB_G0277323</fullName>
    </recommendedName>
</protein>
<sequence length="364" mass="42400">MDILFYKVFRNLYIKNIIFKILRLYKNYSKKYNVFKNVEQYKLFKDKEYLVKMEWDMNIEIPINLIPDNTIKYLKFGKYFNQPIKSLPIGVELIDLKYSLNFNQNQFQIPITLKTLILNRDFNQNFTKLSNNNNDDDNNNLSLNKVENISFGRDYDCLIDETIFSKSITSIKLSDSFCQELDDRTLPKTLTFLEFGWTFNGYLKIGDLDGLSKLRVLKFGVSFNTEIQCNVLPNSIEKITFGSSFNQVILPNSLPRNLRILKFGSSFNQPIFPPPSSLSSESLPNLLKLKFDSSFNQPILPSSLSNSITRLEFRSTHFNQQLSISSLPKNLKYLGIFINNYSTIIEDNDNNNNSEFLKIINILN</sequence>
<gene>
    <name type="ORF">DDB_G0277323</name>
</gene>
<reference key="1">
    <citation type="journal article" date="2002" name="Nature">
        <title>Sequence and analysis of chromosome 2 of Dictyostelium discoideum.</title>
        <authorList>
            <person name="Gloeckner G."/>
            <person name="Eichinger L."/>
            <person name="Szafranski K."/>
            <person name="Pachebat J.A."/>
            <person name="Bankier A.T."/>
            <person name="Dear P.H."/>
            <person name="Lehmann R."/>
            <person name="Baumgart C."/>
            <person name="Parra G."/>
            <person name="Abril J.F."/>
            <person name="Guigo R."/>
            <person name="Kumpf K."/>
            <person name="Tunggal B."/>
            <person name="Cox E.C."/>
            <person name="Quail M.A."/>
            <person name="Platzer M."/>
            <person name="Rosenthal A."/>
            <person name="Noegel A.A."/>
        </authorList>
    </citation>
    <scope>NUCLEOTIDE SEQUENCE [LARGE SCALE GENOMIC DNA]</scope>
    <source>
        <strain>AX4</strain>
    </source>
</reference>
<reference key="2">
    <citation type="journal article" date="2005" name="Nature">
        <title>The genome of the social amoeba Dictyostelium discoideum.</title>
        <authorList>
            <person name="Eichinger L."/>
            <person name="Pachebat J.A."/>
            <person name="Gloeckner G."/>
            <person name="Rajandream M.A."/>
            <person name="Sucgang R."/>
            <person name="Berriman M."/>
            <person name="Song J."/>
            <person name="Olsen R."/>
            <person name="Szafranski K."/>
            <person name="Xu Q."/>
            <person name="Tunggal B."/>
            <person name="Kummerfeld S."/>
            <person name="Madera M."/>
            <person name="Konfortov B.A."/>
            <person name="Rivero F."/>
            <person name="Bankier A.T."/>
            <person name="Lehmann R."/>
            <person name="Hamlin N."/>
            <person name="Davies R."/>
            <person name="Gaudet P."/>
            <person name="Fey P."/>
            <person name="Pilcher K."/>
            <person name="Chen G."/>
            <person name="Saunders D."/>
            <person name="Sodergren E.J."/>
            <person name="Davis P."/>
            <person name="Kerhornou A."/>
            <person name="Nie X."/>
            <person name="Hall N."/>
            <person name="Anjard C."/>
            <person name="Hemphill L."/>
            <person name="Bason N."/>
            <person name="Farbrother P."/>
            <person name="Desany B."/>
            <person name="Just E."/>
            <person name="Morio T."/>
            <person name="Rost R."/>
            <person name="Churcher C.M."/>
            <person name="Cooper J."/>
            <person name="Haydock S."/>
            <person name="van Driessche N."/>
            <person name="Cronin A."/>
            <person name="Goodhead I."/>
            <person name="Muzny D.M."/>
            <person name="Mourier T."/>
            <person name="Pain A."/>
            <person name="Lu M."/>
            <person name="Harper D."/>
            <person name="Lindsay R."/>
            <person name="Hauser H."/>
            <person name="James K.D."/>
            <person name="Quiles M."/>
            <person name="Madan Babu M."/>
            <person name="Saito T."/>
            <person name="Buchrieser C."/>
            <person name="Wardroper A."/>
            <person name="Felder M."/>
            <person name="Thangavelu M."/>
            <person name="Johnson D."/>
            <person name="Knights A."/>
            <person name="Loulseged H."/>
            <person name="Mungall K.L."/>
            <person name="Oliver K."/>
            <person name="Price C."/>
            <person name="Quail M.A."/>
            <person name="Urushihara H."/>
            <person name="Hernandez J."/>
            <person name="Rabbinowitsch E."/>
            <person name="Steffen D."/>
            <person name="Sanders M."/>
            <person name="Ma J."/>
            <person name="Kohara Y."/>
            <person name="Sharp S."/>
            <person name="Simmonds M.N."/>
            <person name="Spiegler S."/>
            <person name="Tivey A."/>
            <person name="Sugano S."/>
            <person name="White B."/>
            <person name="Walker D."/>
            <person name="Woodward J.R."/>
            <person name="Winckler T."/>
            <person name="Tanaka Y."/>
            <person name="Shaulsky G."/>
            <person name="Schleicher M."/>
            <person name="Weinstock G.M."/>
            <person name="Rosenthal A."/>
            <person name="Cox E.C."/>
            <person name="Chisholm R.L."/>
            <person name="Gibbs R.A."/>
            <person name="Loomis W.F."/>
            <person name="Platzer M."/>
            <person name="Kay R.R."/>
            <person name="Williams J.G."/>
            <person name="Dear P.H."/>
            <person name="Noegel A.A."/>
            <person name="Barrell B.G."/>
            <person name="Kuspa A."/>
        </authorList>
    </citation>
    <scope>NUCLEOTIDE SEQUENCE [LARGE SCALE GENOMIC DNA]</scope>
    <source>
        <strain>AX4</strain>
    </source>
</reference>
<keyword id="KW-1185">Reference proteome</keyword>
<keyword id="KW-0677">Repeat</keyword>
<name>Y7732_DICDI</name>
<dbReference type="EMBL" id="AAFI02000019">
    <property type="protein sequence ID" value="EAS66908.1"/>
    <property type="molecule type" value="Genomic_DNA"/>
</dbReference>
<dbReference type="RefSeq" id="XP_001134592.1">
    <property type="nucleotide sequence ID" value="XM_001134592.1"/>
</dbReference>
<dbReference type="SMR" id="Q1ZXK1"/>
<dbReference type="PaxDb" id="44689-DDB0231623"/>
<dbReference type="EnsemblProtists" id="EAS66908">
    <property type="protein sequence ID" value="EAS66908"/>
    <property type="gene ID" value="DDB_G0277323"/>
</dbReference>
<dbReference type="GeneID" id="8620903"/>
<dbReference type="KEGG" id="ddi:DDB_G0277323"/>
<dbReference type="dictyBase" id="DDB_G0277323"/>
<dbReference type="VEuPathDB" id="AmoebaDB:DDB_G0277323"/>
<dbReference type="eggNOG" id="ENOG502SFQ3">
    <property type="taxonomic scope" value="Eukaryota"/>
</dbReference>
<dbReference type="HOGENOM" id="CLU_029080_1_0_1"/>
<dbReference type="InParanoid" id="Q1ZXK1"/>
<dbReference type="OMA" id="RAQGKRQ"/>
<dbReference type="PhylomeDB" id="Q1ZXK1"/>
<dbReference type="PRO" id="PR:Q1ZXK1"/>
<dbReference type="Proteomes" id="UP000002195">
    <property type="component" value="Chromosome 2"/>
</dbReference>
<dbReference type="InterPro" id="IPR008615">
    <property type="entry name" value="FNIP"/>
</dbReference>
<dbReference type="InterPro" id="IPR051251">
    <property type="entry name" value="STK_FNIP-Repeat"/>
</dbReference>
<dbReference type="PANTHER" id="PTHR32134">
    <property type="entry name" value="FNIP REPEAT-CONTAINING PROTEIN"/>
    <property type="match status" value="1"/>
</dbReference>
<dbReference type="PANTHER" id="PTHR32134:SF169">
    <property type="entry name" value="FNIP REPEAT-CONTAINING PROTEIN-RELATED"/>
    <property type="match status" value="1"/>
</dbReference>
<dbReference type="Pfam" id="PF05725">
    <property type="entry name" value="FNIP"/>
    <property type="match status" value="5"/>
</dbReference>
<proteinExistence type="predicted"/>